<proteinExistence type="evidence at transcript level"/>
<name>RYR1_PIG</name>
<reference key="1">
    <citation type="journal article" date="1992" name="Anim. Genet.">
        <title>DNA sequence of the skeletal muscle calcium release channel cDNA and verification of the Arg615--&gt;Cys615 mutation, associated with porcine malignant hyperthermia, in Norwegian landrace pigs.</title>
        <authorList>
            <person name="Harbitz I."/>
            <person name="Kristensen T."/>
            <person name="Bosnes M."/>
            <person name="Kran S."/>
            <person name="Davies W."/>
        </authorList>
    </citation>
    <scope>NUCLEOTIDE SEQUENCE [MRNA]</scope>
    <source>
        <strain>Norwegian Landrace</strain>
        <tissue>Skeletal muscle</tissue>
    </source>
</reference>
<reference key="2">
    <citation type="submission" date="1996-04" db="EMBL/GenBank/DDBJ databases">
        <authorList>
            <person name="Brenig B."/>
        </authorList>
    </citation>
    <scope>NUCLEOTIDE SEQUENCE OF 1129-2801</scope>
</reference>
<reference key="3">
    <citation type="journal article" date="1993" name="Genomics">
        <title>Genomic organization of the porcine skeletal muscle ryanodine receptor (RYR1) gene coding region 4624 to 7929.</title>
        <authorList>
            <person name="Leeb T."/>
            <person name="Schmolzl S."/>
            <person name="Brem G."/>
            <person name="Brenig B."/>
        </authorList>
    </citation>
    <scope>NUCLEOTIDE SEQUENCE [GENOMIC DNA / MRNA] OF 1129-2643</scope>
    <source>
        <strain>German Landrace</strain>
        <tissue>Liver</tissue>
    </source>
</reference>
<reference key="4">
    <citation type="journal article" date="1990" name="Genomics">
        <title>Assignment of the porcine calcium release channel gene, a candidate for the malignant hyperthermia locus, to the 6p11--&gt;q21 segment of chromosome 6.</title>
        <authorList>
            <person name="Harbitz I."/>
            <person name="Chowdhary B."/>
            <person name="Thomsen P.D."/>
            <person name="Davies W."/>
            <person name="Kaufman U."/>
            <person name="Kran S."/>
            <person name="Gustavsson I."/>
            <person name="Christensen K."/>
            <person name="Hauge J.G."/>
        </authorList>
    </citation>
    <scope>NUCLEOTIDE SEQUENCE [MRNA] OF 4785-5035</scope>
</reference>
<dbReference type="EMBL" id="X62880">
    <property type="protein sequence ID" value="CAA44674.1"/>
    <property type="status" value="ALT_SEQ"/>
    <property type="molecule type" value="mRNA"/>
</dbReference>
<dbReference type="EMBL" id="X68247">
    <property type="protein sequence ID" value="CAA48318.1"/>
    <property type="molecule type" value="Genomic_DNA"/>
</dbReference>
<dbReference type="EMBL" id="X69465">
    <property type="protein sequence ID" value="CAA49225.1"/>
    <property type="molecule type" value="Genomic_DNA"/>
</dbReference>
<dbReference type="EMBL" id="M32501">
    <property type="protein sequence ID" value="AAA31022.1"/>
    <property type="molecule type" value="mRNA"/>
</dbReference>
<dbReference type="EMDB" id="EMD-21513"/>
<dbReference type="EMDB" id="EMD-22015"/>
<dbReference type="EMDB" id="EMD-22016"/>
<dbReference type="EMDB" id="EMD-22017"/>
<dbReference type="EMDB" id="EMD-22018"/>
<dbReference type="EMDB" id="EMD-22019"/>
<dbReference type="EMDB" id="EMD-9528"/>
<dbReference type="EMDB" id="EMD-9529"/>
<dbReference type="EMDB" id="EMD-9823"/>
<dbReference type="EMDB" id="EMD-9824"/>
<dbReference type="EMDB" id="EMD-9825"/>
<dbReference type="EMDB" id="EMD-9826"/>
<dbReference type="EMDB" id="EMD-9831"/>
<dbReference type="EMDB" id="EMD-9833"/>
<dbReference type="EMDB" id="EMD-9834"/>
<dbReference type="EMDB" id="EMD-9836"/>
<dbReference type="EMDB" id="EMD-9837"/>
<dbReference type="EMDB" id="EMD-9879"/>
<dbReference type="EMDB" id="EMD-9880"/>
<dbReference type="EMDB" id="EMD-9889"/>
<dbReference type="SMR" id="P16960"/>
<dbReference type="FunCoup" id="P16960">
    <property type="interactions" value="240"/>
</dbReference>
<dbReference type="GlyGen" id="P16960">
    <property type="glycosylation" value="3 sites"/>
</dbReference>
<dbReference type="PaxDb" id="9823-ENSSSCP00000003203"/>
<dbReference type="PeptideAtlas" id="P16960"/>
<dbReference type="eggNOG" id="KOG2243">
    <property type="taxonomic scope" value="Eukaryota"/>
</dbReference>
<dbReference type="InParanoid" id="P16960"/>
<dbReference type="Proteomes" id="UP000008227">
    <property type="component" value="Unplaced"/>
</dbReference>
<dbReference type="Proteomes" id="UP000314985">
    <property type="component" value="Unplaced"/>
</dbReference>
<dbReference type="Proteomes" id="UP000694570">
    <property type="component" value="Unplaced"/>
</dbReference>
<dbReference type="Proteomes" id="UP000694571">
    <property type="component" value="Unplaced"/>
</dbReference>
<dbReference type="Proteomes" id="UP000694720">
    <property type="component" value="Unplaced"/>
</dbReference>
<dbReference type="Proteomes" id="UP000694722">
    <property type="component" value="Unplaced"/>
</dbReference>
<dbReference type="Proteomes" id="UP000694723">
    <property type="component" value="Unplaced"/>
</dbReference>
<dbReference type="Proteomes" id="UP000694724">
    <property type="component" value="Unplaced"/>
</dbReference>
<dbReference type="Proteomes" id="UP000694725">
    <property type="component" value="Unplaced"/>
</dbReference>
<dbReference type="Proteomes" id="UP000694726">
    <property type="component" value="Unplaced"/>
</dbReference>
<dbReference type="Proteomes" id="UP000694727">
    <property type="component" value="Unplaced"/>
</dbReference>
<dbReference type="Proteomes" id="UP000694728">
    <property type="component" value="Unplaced"/>
</dbReference>
<dbReference type="GO" id="GO:0034704">
    <property type="term" value="C:calcium channel complex"/>
    <property type="evidence" value="ECO:0000318"/>
    <property type="project" value="GO_Central"/>
</dbReference>
<dbReference type="GO" id="GO:0031090">
    <property type="term" value="C:organelle membrane"/>
    <property type="evidence" value="ECO:0000250"/>
    <property type="project" value="UniProtKB"/>
</dbReference>
<dbReference type="GO" id="GO:1990425">
    <property type="term" value="C:ryanodine receptor complex"/>
    <property type="evidence" value="ECO:0000250"/>
    <property type="project" value="UniProtKB"/>
</dbReference>
<dbReference type="GO" id="GO:0042383">
    <property type="term" value="C:sarcolemma"/>
    <property type="evidence" value="ECO:0000318"/>
    <property type="project" value="GO_Central"/>
</dbReference>
<dbReference type="GO" id="GO:0016529">
    <property type="term" value="C:sarcoplasmic reticulum"/>
    <property type="evidence" value="ECO:0000250"/>
    <property type="project" value="UniProtKB"/>
</dbReference>
<dbReference type="GO" id="GO:0033017">
    <property type="term" value="C:sarcoplasmic reticulum membrane"/>
    <property type="evidence" value="ECO:0000250"/>
    <property type="project" value="UniProtKB"/>
</dbReference>
<dbReference type="GO" id="GO:0005790">
    <property type="term" value="C:smooth endoplasmic reticulum"/>
    <property type="evidence" value="ECO:0000318"/>
    <property type="project" value="GO_Central"/>
</dbReference>
<dbReference type="GO" id="GO:0014802">
    <property type="term" value="C:terminal cisterna"/>
    <property type="evidence" value="ECO:0000250"/>
    <property type="project" value="UniProtKB"/>
</dbReference>
<dbReference type="GO" id="GO:0030018">
    <property type="term" value="C:Z disc"/>
    <property type="evidence" value="ECO:0000318"/>
    <property type="project" value="GO_Central"/>
</dbReference>
<dbReference type="GO" id="GO:0005524">
    <property type="term" value="F:ATP binding"/>
    <property type="evidence" value="ECO:0000250"/>
    <property type="project" value="UniProtKB"/>
</dbReference>
<dbReference type="GO" id="GO:0005262">
    <property type="term" value="F:calcium channel activity"/>
    <property type="evidence" value="ECO:0000250"/>
    <property type="project" value="UniProtKB"/>
</dbReference>
<dbReference type="GO" id="GO:0005509">
    <property type="term" value="F:calcium ion binding"/>
    <property type="evidence" value="ECO:0000250"/>
    <property type="project" value="UniProtKB"/>
</dbReference>
<dbReference type="GO" id="GO:0005516">
    <property type="term" value="F:calmodulin binding"/>
    <property type="evidence" value="ECO:0007669"/>
    <property type="project" value="UniProtKB-KW"/>
</dbReference>
<dbReference type="GO" id="GO:0005219">
    <property type="term" value="F:ryanodine-sensitive calcium-release channel activity"/>
    <property type="evidence" value="ECO:0000250"/>
    <property type="project" value="UniProtKB"/>
</dbReference>
<dbReference type="GO" id="GO:0005245">
    <property type="term" value="F:voltage-gated calcium channel activity"/>
    <property type="evidence" value="ECO:0000250"/>
    <property type="project" value="UniProtKB"/>
</dbReference>
<dbReference type="GO" id="GO:0070588">
    <property type="term" value="P:calcium ion transmembrane transport"/>
    <property type="evidence" value="ECO:0000250"/>
    <property type="project" value="UniProtKB"/>
</dbReference>
<dbReference type="GO" id="GO:0071313">
    <property type="term" value="P:cellular response to caffeine"/>
    <property type="evidence" value="ECO:0000250"/>
    <property type="project" value="UniProtKB"/>
</dbReference>
<dbReference type="GO" id="GO:0071277">
    <property type="term" value="P:cellular response to calcium ion"/>
    <property type="evidence" value="ECO:0000250"/>
    <property type="project" value="UniProtKB"/>
</dbReference>
<dbReference type="GO" id="GO:0006874">
    <property type="term" value="P:intracellular calcium ion homeostasis"/>
    <property type="evidence" value="ECO:0007669"/>
    <property type="project" value="InterPro"/>
</dbReference>
<dbReference type="GO" id="GO:0006936">
    <property type="term" value="P:muscle contraction"/>
    <property type="evidence" value="ECO:0000250"/>
    <property type="project" value="UniProtKB"/>
</dbReference>
<dbReference type="GO" id="GO:0043931">
    <property type="term" value="P:ossification involved in bone maturation"/>
    <property type="evidence" value="ECO:0000250"/>
    <property type="project" value="UniProtKB"/>
</dbReference>
<dbReference type="GO" id="GO:0003151">
    <property type="term" value="P:outflow tract morphogenesis"/>
    <property type="evidence" value="ECO:0000250"/>
    <property type="project" value="UniProtKB"/>
</dbReference>
<dbReference type="GO" id="GO:0051289">
    <property type="term" value="P:protein homotetramerization"/>
    <property type="evidence" value="ECO:0000250"/>
    <property type="project" value="UniProtKB"/>
</dbReference>
<dbReference type="GO" id="GO:0014808">
    <property type="term" value="P:release of sequestered calcium ion into cytosol by sarcoplasmic reticulum"/>
    <property type="evidence" value="ECO:0000250"/>
    <property type="project" value="UniProtKB"/>
</dbReference>
<dbReference type="GO" id="GO:0048741">
    <property type="term" value="P:skeletal muscle fiber development"/>
    <property type="evidence" value="ECO:0000250"/>
    <property type="project" value="UniProtKB"/>
</dbReference>
<dbReference type="GO" id="GO:0043588">
    <property type="term" value="P:skin development"/>
    <property type="evidence" value="ECO:0000250"/>
    <property type="project" value="UniProtKB"/>
</dbReference>
<dbReference type="CDD" id="cd23290">
    <property type="entry name" value="beta-trefoil_MIR_RyR1"/>
    <property type="match status" value="1"/>
</dbReference>
<dbReference type="CDD" id="cd12877">
    <property type="entry name" value="SPRY1_RyR"/>
    <property type="match status" value="1"/>
</dbReference>
<dbReference type="CDD" id="cd12878">
    <property type="entry name" value="SPRY2_RyR"/>
    <property type="match status" value="1"/>
</dbReference>
<dbReference type="CDD" id="cd12879">
    <property type="entry name" value="SPRY3_RyR"/>
    <property type="match status" value="1"/>
</dbReference>
<dbReference type="FunFam" id="1.10.490.160:FF:000008">
    <property type="match status" value="1"/>
</dbReference>
<dbReference type="FunFam" id="2.60.120.920:FF:000019">
    <property type="entry name" value="Ryanodine receptor 1 (skeletal)"/>
    <property type="match status" value="1"/>
</dbReference>
<dbReference type="FunFam" id="2.80.10.50:FF:000009">
    <property type="entry name" value="Ryanodine receptor 1 (skeletal)"/>
    <property type="match status" value="1"/>
</dbReference>
<dbReference type="FunFam" id="1.10.490.160:FF:000001">
    <property type="entry name" value="Ryanodine receptor 2 (Cardiac)"/>
    <property type="match status" value="1"/>
</dbReference>
<dbReference type="FunFam" id="2.80.10.50:FF:000006">
    <property type="entry name" value="Ryanodine receptor 2 (Cardiac)"/>
    <property type="match status" value="1"/>
</dbReference>
<dbReference type="FunFam" id="1.10.287.70:FF:000017">
    <property type="entry name" value="ryanodine receptor isoform X2"/>
    <property type="match status" value="1"/>
</dbReference>
<dbReference type="FunFam" id="1.25.10.30:FF:000002">
    <property type="entry name" value="ryanodine receptor isoform X2"/>
    <property type="match status" value="1"/>
</dbReference>
<dbReference type="FunFam" id="2.60.120.920:FF:000002">
    <property type="entry name" value="ryanodine receptor isoform X2"/>
    <property type="match status" value="1"/>
</dbReference>
<dbReference type="FunFam" id="2.60.120.920:FF:000003">
    <property type="entry name" value="ryanodine receptor isoform X2"/>
    <property type="match status" value="1"/>
</dbReference>
<dbReference type="Gene3D" id="1.10.287.70">
    <property type="match status" value="1"/>
</dbReference>
<dbReference type="Gene3D" id="1.10.490.160">
    <property type="match status" value="2"/>
</dbReference>
<dbReference type="Gene3D" id="2.60.120.920">
    <property type="match status" value="3"/>
</dbReference>
<dbReference type="Gene3D" id="2.80.10.50">
    <property type="match status" value="2"/>
</dbReference>
<dbReference type="Gene3D" id="6.20.350.10">
    <property type="match status" value="1"/>
</dbReference>
<dbReference type="Gene3D" id="1.25.10.30">
    <property type="entry name" value="IP3 receptor type 1 binding core, RIH domain"/>
    <property type="match status" value="1"/>
</dbReference>
<dbReference type="InterPro" id="IPR001870">
    <property type="entry name" value="B30.2/SPRY"/>
</dbReference>
<dbReference type="InterPro" id="IPR043136">
    <property type="entry name" value="B30.2/SPRY_sf"/>
</dbReference>
<dbReference type="InterPro" id="IPR013320">
    <property type="entry name" value="ConA-like_dom_sf"/>
</dbReference>
<dbReference type="InterPro" id="IPR011992">
    <property type="entry name" value="EF-hand-dom_pair"/>
</dbReference>
<dbReference type="InterPro" id="IPR014821">
    <property type="entry name" value="Ins145_P3_rcpt"/>
</dbReference>
<dbReference type="InterPro" id="IPR005821">
    <property type="entry name" value="Ion_trans_dom"/>
</dbReference>
<dbReference type="InterPro" id="IPR036300">
    <property type="entry name" value="MIR_dom_sf"/>
</dbReference>
<dbReference type="InterPro" id="IPR016093">
    <property type="entry name" value="MIR_motif"/>
</dbReference>
<dbReference type="InterPro" id="IPR013662">
    <property type="entry name" value="RIH_assoc-dom"/>
</dbReference>
<dbReference type="InterPro" id="IPR000699">
    <property type="entry name" value="RIH_dom"/>
</dbReference>
<dbReference type="InterPro" id="IPR013333">
    <property type="entry name" value="Ryan_recept"/>
</dbReference>
<dbReference type="InterPro" id="IPR015925">
    <property type="entry name" value="Ryanodine_IP3_receptor"/>
</dbReference>
<dbReference type="InterPro" id="IPR003032">
    <property type="entry name" value="Ryanodine_rcpt"/>
</dbReference>
<dbReference type="InterPro" id="IPR009460">
    <property type="entry name" value="Ryanrecept_TM4-6"/>
</dbReference>
<dbReference type="InterPro" id="IPR048581">
    <property type="entry name" value="RYDR_Jsol"/>
</dbReference>
<dbReference type="InterPro" id="IPR035910">
    <property type="entry name" value="RyR/IP3R_RIH_dom_sf"/>
</dbReference>
<dbReference type="InterPro" id="IPR035761">
    <property type="entry name" value="SPRY1_RyR"/>
</dbReference>
<dbReference type="InterPro" id="IPR035764">
    <property type="entry name" value="SPRY2_RyR"/>
</dbReference>
<dbReference type="InterPro" id="IPR035762">
    <property type="entry name" value="SPRY3_RyR"/>
</dbReference>
<dbReference type="InterPro" id="IPR003877">
    <property type="entry name" value="SPRY_dom"/>
</dbReference>
<dbReference type="PANTHER" id="PTHR46399">
    <property type="entry name" value="B30.2/SPRY DOMAIN-CONTAINING PROTEIN"/>
    <property type="match status" value="1"/>
</dbReference>
<dbReference type="PANTHER" id="PTHR46399:SF10">
    <property type="entry name" value="RYANODINE RECEPTOR 1"/>
    <property type="match status" value="1"/>
</dbReference>
<dbReference type="Pfam" id="PF08709">
    <property type="entry name" value="Ins145_P3_rec"/>
    <property type="match status" value="1"/>
</dbReference>
<dbReference type="Pfam" id="PF00520">
    <property type="entry name" value="Ion_trans"/>
    <property type="match status" value="1"/>
</dbReference>
<dbReference type="Pfam" id="PF02815">
    <property type="entry name" value="MIR"/>
    <property type="match status" value="1"/>
</dbReference>
<dbReference type="Pfam" id="PF08454">
    <property type="entry name" value="RIH_assoc"/>
    <property type="match status" value="1"/>
</dbReference>
<dbReference type="Pfam" id="PF06459">
    <property type="entry name" value="RR_TM4-6"/>
    <property type="match status" value="1"/>
</dbReference>
<dbReference type="Pfam" id="PF01365">
    <property type="entry name" value="RYDR_ITPR"/>
    <property type="match status" value="2"/>
</dbReference>
<dbReference type="Pfam" id="PF21119">
    <property type="entry name" value="RYDR_Jsol"/>
    <property type="match status" value="1"/>
</dbReference>
<dbReference type="Pfam" id="PF02026">
    <property type="entry name" value="RyR"/>
    <property type="match status" value="4"/>
</dbReference>
<dbReference type="Pfam" id="PF00622">
    <property type="entry name" value="SPRY"/>
    <property type="match status" value="3"/>
</dbReference>
<dbReference type="PRINTS" id="PR00795">
    <property type="entry name" value="RYANODINER"/>
</dbReference>
<dbReference type="SMART" id="SM00472">
    <property type="entry name" value="MIR"/>
    <property type="match status" value="4"/>
</dbReference>
<dbReference type="SMART" id="SM00449">
    <property type="entry name" value="SPRY"/>
    <property type="match status" value="3"/>
</dbReference>
<dbReference type="SUPFAM" id="SSF49899">
    <property type="entry name" value="Concanavalin A-like lectins/glucanases"/>
    <property type="match status" value="3"/>
</dbReference>
<dbReference type="SUPFAM" id="SSF47473">
    <property type="entry name" value="EF-hand"/>
    <property type="match status" value="1"/>
</dbReference>
<dbReference type="SUPFAM" id="SSF100909">
    <property type="entry name" value="IP3 receptor type 1 binding core, domain 2"/>
    <property type="match status" value="2"/>
</dbReference>
<dbReference type="SUPFAM" id="SSF82109">
    <property type="entry name" value="MIR domain"/>
    <property type="match status" value="2"/>
</dbReference>
<dbReference type="PROSITE" id="PS50188">
    <property type="entry name" value="B302_SPRY"/>
    <property type="match status" value="3"/>
</dbReference>
<dbReference type="PROSITE" id="PS50919">
    <property type="entry name" value="MIR"/>
    <property type="match status" value="5"/>
</dbReference>
<keyword id="KW-0067">ATP-binding</keyword>
<keyword id="KW-0106">Calcium</keyword>
<keyword id="KW-0107">Calcium channel</keyword>
<keyword id="KW-0109">Calcium transport</keyword>
<keyword id="KW-0112">Calmodulin-binding</keyword>
<keyword id="KW-0217">Developmental protein</keyword>
<keyword id="KW-0407">Ion channel</keyword>
<keyword id="KW-0406">Ion transport</keyword>
<keyword id="KW-1071">Ligand-gated ion channel</keyword>
<keyword id="KW-0472">Membrane</keyword>
<keyword id="KW-0479">Metal-binding</keyword>
<keyword id="KW-0547">Nucleotide-binding</keyword>
<keyword id="KW-0597">Phosphoprotein</keyword>
<keyword id="KW-0675">Receptor</keyword>
<keyword id="KW-1185">Reference proteome</keyword>
<keyword id="KW-0677">Repeat</keyword>
<keyword id="KW-0702">S-nitrosylation</keyword>
<keyword id="KW-0703">Sarcoplasmic reticulum</keyword>
<keyword id="KW-0812">Transmembrane</keyword>
<keyword id="KW-1133">Transmembrane helix</keyword>
<keyword id="KW-0813">Transport</keyword>
<gene>
    <name evidence="11" type="primary">RYR1</name>
    <name type="synonym">CRC</name>
</gene>
<protein>
    <recommendedName>
        <fullName evidence="5">Ryanodine receptor 1</fullName>
        <shortName>RYR-1</shortName>
        <shortName>RyR1</shortName>
    </recommendedName>
    <alternativeName>
        <fullName>Skeletal muscle calcium release channel</fullName>
    </alternativeName>
    <alternativeName>
        <fullName>Skeletal muscle ryanodine receptor</fullName>
    </alternativeName>
    <alternativeName>
        <fullName>Skeletal muscle-type ryanodine receptor</fullName>
    </alternativeName>
    <alternativeName>
        <fullName>Type 1 ryanodine receptor</fullName>
    </alternativeName>
</protein>
<sequence length="5035" mass="565332">MGDGGEGEDEVQFLRTDDEVVLQCNATVLKEQLKLCLAAEGFGNRLCFLEPTSNAQNVPPDLAICCFVLEQSLSVRALQEMLANTVEAGVESSQGGGHRTLLYGHAILLRHAHSGMYLSCLTTSRSMTDKLAFDVGLQEDATGEACWWTTHPASKQRSEGEKVRVGDDLILVSVSSERYLHLSTASGELQVDASFMQTLWNMNPICSGCEEGYVTGGHVLRLFHGHMDECLTISPADSDDQRRLVYYEGGSVCTHARSLWRLEPLRISWSGSHLRWGQPLRIRHVTTGRYLALIEDQGLVVVDASKAHTKATSFCFRISKEKLDTAPKRDVEGMGPPEIKYGESLCFVQHVASGLWLTYAAPDPKALRLGVLKKKAILHQEGHMDDALSLTRCQQEESQAARMIYSTAGLYNHFIKGLDSFSGKPRGSGAPAGTALPLEGVILSLQDLIGYFEPPSEELQHEEKQSKLRSLRNRQSLFQEEGMLSLVLNCIDRLNVYTTAAHFAEFAGEEAAESWKEIVNLLYEILASLIRGNRANCALFSNNLDWLVSKLDRLEASSGILEVLYCVLIESPEVLNIIQENHIKSIISLLDKHGRNHKVLDVLCSLCVCNGVAVRSNQDLITENLLPGRELLLQTNLINYVTSIRPNIFVGRAEGTTQYSKWYFEVMVDEVVPFLTAQATHLRVGWALTEGYSPYPGGGEGWGGNGVGDDLYSYGFDGLHLWTGHVPRLVTSPGQHLLAPEDVVSCCLDLSVPSISFRINGCPVQGVFEAFNLNGLFFPVVSFSAGVKVRFLLGGRHGEFKFLPPPGYAPCHEAVLPRERLRLEPIKEYRREGPRGPHLVGPSRCLSHTDFVPCPVDTVQIVLPPHLERIREKLAENIHELWALTRIEQGWTYGPVRDDNKRLHPCLVDFHSLPEPERNYNLQMSGETLKTLLALGCHVGMADEKAEDNLRKTKLPKTYMMSNGYKPAPLDLSHVRLTPAQTTLVDRLAENGHNVWARDRVAQGWSYSAVQDIPARRNPRLVPYRLLDEATKRSNRDSLCQAVRTLLGYGYNIEPPDQEPSQVESQSRWDRVRIFRAEKSYAVQSGRWYFEFEAVTTGEMRVGWARPELRPDVELGADELAYVFNGHRGQRWHLGSELFGRPWQSGDVVGCMIDLTENTIIFTLNGEVLMSDSGSETAFRDIEVGDGFLPVCSLGPGQVGHLNLGQDVSSLRFFAICGLQEGFEPFAINMQRPVTTWFSKSLPQFEAVPLEHPHYEVSRVDGTVDTPPCLRLTHRTWGSQNSLVEMLFLRLSLPVQFHQHFRCTAGATPLAPPGLQPPAEDEARAAEPDPDYENLRRSAGRWGEAEGGKEGTAKEGAPGGTAQAGVEAQPPRAENEKDATTEKNKKRGFLFKAKKAAMMTQPPATPTLPRLPHEVVPADDRDDPDIILNTTTYYYSVRVFAGQEPSCVWVGWVTPDYHQHDMNFDLTKVRAVTVTMGDEQGNIHSSLKCSNCYMVWGGDFVSPGQQGRISHTDLVIGCLVDLATGLMTFTANGKESNTFFQVEPNTKLFPAVFVLPTHQNVIQFELGKQKNIMPLSAAMFLSERKNPAPQCPPRLEMQMLMPVSWSRMPNHFLRVETRRAGERLGWAVQCQEPLTMMALHIPEENRCMDILELSERLDLQQFHSHTLRLYRAVCALGNNRVAHALCSHVDQAQLLHALEDAHLPGPLRAGYYDLLISIHLESACRSRRSMLSEYIVPLTPETRAITLFPPGKRTENGPRRHGLPGVGVTTSLRPPHHFSAPCFVAALPAVGAAEAPARLSPSIPLEALRDKALRMLGEAVRDGGQHARDPVGGSVEFQFVPVLKLVSTLLVMGIFGDEDVKQILKMIEPEVFTEEEEEEEEEEEEEEEDEEEKEEDEEEEAREKEDEEKEEEETAEGEKEEYLEEGLLQMKLPESVKLQMCNLLEYFCDQELQHRVESLAAFAERYVDKLQANQRDRYGILMKAFTMTAAETARRTREFRSPPQEQINMLLHFKDGEDEEDCPLPDEIRQDLLEFHQDLLTHCGIQLEGEEEEPEEEATLGSRLMSLLEKVRLVKKKEEKSEEEPPAEESKAQSLQELVSHTVVRWAQEDFVQSPELVRAMFSLLHRQYDGLGELLRALPRAYTISPSSVEDTMSLLECLGQIRSLLIVQMGPQEENLMIQSIGNIMNNKVFYQHPNLMRALGMHETVMEVMVNVLGGGESKEIRFPKMVTSCCRFLCYFCRISRQNQRSMFDHLSYLLENSGIGLGMQGSTPLDVAAASVIDNNELALALQEQDLEKVVSYLAGCGLQSCPMLLAKGYPDIGWNPCGGERYLDFLRFAVFVNGESVEENANVVVRLLIRKPECFGPALRGEGGSGLLATIEEAIRISEDPARDGPGVRRDRRREHFGEEPPEENRVHLGHAIMSFYAALIDLLGRCAPEMHLIQAGKGEALRIRAILRSLVPLDDLVGIISLPLQIPTLGKDGALVQPKMSASFVPDHKASMVLFLDRVYGIENQDFLLHVLDVGFLPDMRAAASLDTATFSTTEMALALNRYLCLAVLPLITKCAPLFAGTEHRAIMVDSMLHTVYRLSRGRSLTKAQRDVIEECLMALCRYIRPSMLQHLLRRLVFDVPILNEFAKMPLKLLTNHYERCWKYYCLPTGWANFGVTSEEELHLTRKLFWGIFDSLAHKKYDPELYRMAMPCLCAIAGALPPDYVDASYSSKAEKKATVDAEGNFDPRPVETLNVIIPEKLDSFINKFAEYTHEKWAFDKIQNNWSYGENIDEELKTHPMLRPYKTFSEKDKEIYRWPIKESLKAMIAWEWTIEKAREGEEEKTEKKKTRKISQSAQTYDAREGYNPQPPDLSGVTLSRELQAMAEQLAENYHNTWGRKKKQELEAKGGGTHPLLVPYDTLTAKEKARDREKAQELLKFLQMNGYAVTRGLKDMELDTSSIEKRFAFGFLQQLLRWMDISQEFIAHLEAVVSSGRVEKSPHEQEIKFFAKILLPLINQYFTNHCLYFLSTPAKVLGSGGHASNKEKEMITSLFCKLAALVRHRVSLFGTDAPAVVNCLHILARSLDARTVMKSGPEIVKAGLRSFFESASEDIEKMVENLRLGKVSQARTQVKGVGQNLTYTTVALLPVLTTLFQHIAQHQFGDDVILDDVQVSCYRTLCSIYSLGTTRNPYVEKLRPALGECLARLAAAMPVAFLEPQLNEYNACSVYTTKSPRERAILGLPNSVEEMCPDIPVLERLMADIGGLAESGARYTEMPHVIEITLPMLCSYLPRWWERGPEAPPPALPAGAPPPCTAVTSDHLNSLLGNILRIIVNNLGIDEASWMKRLAVFAQPIVSRARPELLHSHFIPTIGRLRKRAGKVVAEEEQLRLEAKAEAEEGELLVRDEFSVLCRDLYALYPLLIRYVDNNRAHWLTEPNPSAEELFRMVGEIFIYWSKSHNFKREEQNFVVQNEINNMSFLTADNKSKMAKSGGSDQERTKKKRLGDRYSVQTSLIVATLKKMLPIGLNMCAPTDQELITLAKTRYALKDTDEEVREFLQNNLHLQGKVEGSPSLRWQMALYRGLPGREEDADDPEKIVRRVQEVSAVLYHLEQMEHPYKSKKAVWHKLLSKQRRRAVVACFRMTPLYNLPTHRACNMFLESYKAAWILTEDHSFEDRMIDDLSKAGEQEEEEEEVEEKKPDPLHQLVLHFSRTALTEKSKLDEDYLYMAYADIMAKSCHLEEGGENGEAQEEVEVSFEEKEMEKQRLLYQQARLHNRGAAEMVLQMISACKGETGAMVSSTLKLGISILNGGNADVQQKMLDYLKDKKEVGFFQSIQALMQTCSVLDLNAFERQNKAEGLGMVNEDGTVINRQNGEKVMADDEFTQDLFRFLQLLCEGHNNDFQNYLRTQTGNTTTINIIICTVDYLLRLQESISDFYWYYSGKDVIEEQGKRNFSKAMSVAKQVFNSLTEYIQGPCTGNQQSLAHSRLWDAVVGFLHVFAHMMMKLAQDSSQIELLKELLDLQKDMVVMLLSLLEGNVVNGMIARQMVDMLVESSSNVEMILKFFDMFLKLKDIVGSEAFQDYVTDPRGLISKKDFQKAMDSQKQFTGPEIQFLLSCSEADENEMIDCEEFANRFQEPARDIGFNVAVLLTNLSEHVPHDPRLRNFLELAESILEYFRPYLGRIEIMGASRRIERIYFEISETNRAQWEMPQVKESKRQFIFDVVNEGGESEKMELFVSFCEDTIFEMQIAAQISEPEGEPEEDEDEGAGLAEAGAEGAEEGAVGPEGAAGTAAAGLTARLAAATSRALRGLSYRSLRRRVRRLRRLTAREAATALAALLWAALAHAGAAGAGAAAGALRLLWGSLFGGGLVEGAKKVTVTELLAGMPDPTGDEVHGEQPAGPGGEADGEGAGEGAGEAWEGAGDEEVAVQEAGPGGADGAVAVAEGGPFRPEGAGGLGDMGDTTPAEPPTPEGSPIIKRKLGVDGEEEELPPEPEPEPEPEPEKADAENGEKEEVPKPPPEPPKKTAPPPPPPKKEEGGSGGLEFWGELEVQRVKFLNYLSRNFYTLRFLALFLAFAINFILLFYKVSDSPPGEDDMEGSAAGDLSGAGSGGGSGWGSGAGEEVEGDEDENMVYYFLEESTGYMEPALRCLSLLHTLVAFLCIIGYNCLKVPLVIFKREKELARKLEFDGLYITEQPEDDDVKGQWDRLVLNTPSFPSNYWDKFVKRKVLDKHGDIYGRERIAELLGMDLATLEITAHNERKPEPPPGLLTWLMSIDVKYQIWKFGVIFTDNSFLYLGWYMVMSLLGHYNNFFFAAHLLDIAMGVKTLRTILSSVTHNGKQLVMTVGLLAVVVYLYTVVAFNFFRKFYNKSEDEDEPDMKCDDMMTCYLFHMYVGVRAGGGIGDEIEDPAGDEYELYRVVFDITFFFFVIVILLAIIQGLIIDAFGELRDQQEQVREDMETKCFICGIGSDYFDTTPHRFETHTLEEHNLANYMFFLMYLINKDETEHTGQESYVWKMYQERCWDFFPAGDCFRKQYEDQLS</sequence>
<comment type="function">
    <text evidence="2 4">Cytosolic calcium-activated calcium channel that mediates the release of Ca(2+) from the sarcoplasmic reticulum into the cytosol and thereby plays a key role in triggering muscle contraction following depolarization of T-tubules (By similarity). Repeated very high-level exercise increases the open probability of the channel and leads to Ca(2+) leaking into the cytoplasm (By similarity). Can also mediate the release of Ca(2+) from intracellular stores in neurons, and may thereby promote prolonged Ca(2+) signaling in the brain. Required for normal embryonic development of muscle fibers and skeletal muscle. Required for normal heart morphogenesis, skin development and ossification during embryogenesis (By similarity).</text>
</comment>
<comment type="activity regulation">
    <text evidence="4">The calcium release is activated by increased cytosolic calcium levels, by nitric oxyde (NO), caffeine and ATP. Channel activity is modulated by the alkaloid ryanodine that binds to the open Ca-release channel with high affinity. At low concentrations, ryanodine maintains the channel in an open conformation. High ryanodine concentrations inhibit channel activity. Channel activity is regulated by calmodulin (CALM). Channel activity is inhibited by magnesium ions, possibly by competition for calcium binding sites.</text>
</comment>
<comment type="subunit">
    <text evidence="2 4 5">Homotetramer. Can also form heterotetramers with RYR2 (By similarity). Identified in a complex composed of RYR1, PDE4D, PKA, FKBP1A and protein phosphatase 1 (PP1). Repeated very high-level exercise decreases interaction with PDE4D and protein phosphatase 1 (PP1) (By similarity). Interacts with CALM; CALM with bound calcium inhibits the RYR1 channel activity (By similarity). Interacts with S100A1 (By similarity). Interacts with FKBP1A; this stabilizes the closed conformation of the channel. Interacts with CACNA1S; interaction with CACNA1S is important for activation of the RYR1 channel. Interacts with CACNB1. Interacts with TRDN and ASPH; these interactions stimulate RYR1 channel activity. Interacts with SELENON (By similarity). Interacts with scorpion calcins (AC P0DPT1; AC P0DM30; AC A0A1L4BJ42; AC P59868; AC P60254; AC B8QG00; AC L0GBR1; AC P60252; AC P60253) (By similarity).</text>
</comment>
<comment type="subcellular location">
    <subcellularLocation>
        <location evidence="4">Sarcoplasmic reticulum membrane</location>
        <topology evidence="6">Multi-pass membrane protein</topology>
    </subcellularLocation>
    <text evidence="4">The number of predicted transmembrane domains varies between orthologs. Both N-terminus and C-terminus are cytoplasmic.</text>
</comment>
<comment type="domain">
    <text evidence="4">The calcium release channel activity resides in the C-terminal region while the remaining part of the protein constitutes the 'foot' structure spanning the junctional gap between the sarcoplasmic reticulum (SR) and the T-tubule. Pore opening is mediated via the cytoplasmic calcium-binding domains that mediate a small rotation of the channel-forming transmembrane regions that then leads to channel opening.</text>
</comment>
<comment type="PTM">
    <text evidence="5">Channel activity is modulated by phosphorylation. Phosphorylation at Ser-2844 may increase channel activity. Repeated very high-level exercise increases phosphorylation at Ser-2844.</text>
</comment>
<comment type="PTM">
    <text evidence="4 5">Activated by reversible S-nitrosylation (By similarity). Repeated very high-level exercise increases S-nitrosylation (By similarity).</text>
</comment>
<comment type="similarity">
    <text evidence="12">Belongs to the ryanodine receptor (TC 1.A.3.1) family. RYR1 subfamily.</text>
</comment>
<evidence type="ECO:0000250" key="1"/>
<evidence type="ECO:0000250" key="2">
    <source>
        <dbReference type="UniProtKB" id="E9PZQ0"/>
    </source>
</evidence>
<evidence type="ECO:0000250" key="3">
    <source>
        <dbReference type="UniProtKB" id="F1LMY4"/>
    </source>
</evidence>
<evidence type="ECO:0000250" key="4">
    <source>
        <dbReference type="UniProtKB" id="P11716"/>
    </source>
</evidence>
<evidence type="ECO:0000250" key="5">
    <source>
        <dbReference type="UniProtKB" id="P21817"/>
    </source>
</evidence>
<evidence type="ECO:0000255" key="6"/>
<evidence type="ECO:0000255" key="7">
    <source>
        <dbReference type="PROSITE-ProRule" id="PRU00131"/>
    </source>
</evidence>
<evidence type="ECO:0000255" key="8">
    <source>
        <dbReference type="PROSITE-ProRule" id="PRU00448"/>
    </source>
</evidence>
<evidence type="ECO:0000255" key="9">
    <source>
        <dbReference type="PROSITE-ProRule" id="PRU00548"/>
    </source>
</evidence>
<evidence type="ECO:0000256" key="10">
    <source>
        <dbReference type="SAM" id="MobiDB-lite"/>
    </source>
</evidence>
<evidence type="ECO:0000303" key="11">
    <source>
    </source>
</evidence>
<evidence type="ECO:0000305" key="12"/>
<organism>
    <name type="scientific">Sus scrofa</name>
    <name type="common">Pig</name>
    <dbReference type="NCBI Taxonomy" id="9823"/>
    <lineage>
        <taxon>Eukaryota</taxon>
        <taxon>Metazoa</taxon>
        <taxon>Chordata</taxon>
        <taxon>Craniata</taxon>
        <taxon>Vertebrata</taxon>
        <taxon>Euteleostomi</taxon>
        <taxon>Mammalia</taxon>
        <taxon>Eutheria</taxon>
        <taxon>Laurasiatheria</taxon>
        <taxon>Artiodactyla</taxon>
        <taxon>Suina</taxon>
        <taxon>Suidae</taxon>
        <taxon>Sus</taxon>
    </lineage>
</organism>
<feature type="chain" id="PRO_0000219359" description="Ryanodine receptor 1">
    <location>
        <begin position="1"/>
        <end position="5035"/>
    </location>
</feature>
<feature type="topological domain" description="Cytoplasmic" evidence="4">
    <location>
        <begin position="1"/>
        <end position="4556"/>
    </location>
</feature>
<feature type="transmembrane region" description="Helical; Name=1" evidence="4">
    <location>
        <begin position="4557"/>
        <end position="4577"/>
    </location>
</feature>
<feature type="topological domain" description="Lumenal" evidence="4">
    <location>
        <begin position="4578"/>
        <end position="4638"/>
    </location>
</feature>
<feature type="transmembrane region" description="Helical; Name=2" evidence="4">
    <location>
        <begin position="4639"/>
        <end position="4659"/>
    </location>
</feature>
<feature type="topological domain" description="Cytoplasmic" evidence="4">
    <location>
        <begin position="4660"/>
        <end position="4777"/>
    </location>
</feature>
<feature type="transmembrane region" description="Helical; Name=3" evidence="4">
    <location>
        <begin position="4778"/>
        <end position="4800"/>
    </location>
</feature>
<feature type="topological domain" description="Lumenal" evidence="4">
    <location>
        <position position="4801"/>
    </location>
</feature>
<feature type="transmembrane region" description="Helical; Name=4" evidence="4">
    <location>
        <begin position="4802"/>
        <end position="4818"/>
    </location>
</feature>
<feature type="topological domain" description="Cytoplasmic" evidence="4">
    <location>
        <begin position="4819"/>
        <end position="4833"/>
    </location>
</feature>
<feature type="transmembrane region" description="Helical; Name=5" evidence="4">
    <location>
        <begin position="4834"/>
        <end position="4854"/>
    </location>
</feature>
<feature type="topological domain" description="Lumenal" evidence="4">
    <location>
        <begin position="4855"/>
        <end position="4877"/>
    </location>
</feature>
<feature type="intramembrane region" description="Pore-forming" evidence="4">
    <location>
        <begin position="4878"/>
        <end position="4897"/>
    </location>
</feature>
<feature type="topological domain" description="Lumenal" evidence="4">
    <location>
        <begin position="4898"/>
        <end position="4917"/>
    </location>
</feature>
<feature type="transmembrane region" description="Helical; Name=6" evidence="4">
    <location>
        <begin position="4918"/>
        <end position="4938"/>
    </location>
</feature>
<feature type="topological domain" description="Cytoplasmic" evidence="4">
    <location>
        <begin position="4939"/>
        <end position="5035"/>
    </location>
</feature>
<feature type="domain" description="MIR 1" evidence="7">
    <location>
        <begin position="98"/>
        <end position="153"/>
    </location>
</feature>
<feature type="domain" description="MIR 2" evidence="7">
    <location>
        <begin position="160"/>
        <end position="205"/>
    </location>
</feature>
<feature type="domain" description="MIR 3" evidence="7">
    <location>
        <begin position="211"/>
        <end position="265"/>
    </location>
</feature>
<feature type="domain" description="MIR 4" evidence="7">
    <location>
        <begin position="271"/>
        <end position="334"/>
    </location>
</feature>
<feature type="domain" description="MIR 5" evidence="7">
    <location>
        <begin position="336"/>
        <end position="393"/>
    </location>
</feature>
<feature type="domain" description="B30.2/SPRY 1" evidence="9">
    <location>
        <begin position="582"/>
        <end position="798"/>
    </location>
</feature>
<feature type="repeat" description="1">
    <location>
        <begin position="842"/>
        <end position="955"/>
    </location>
</feature>
<feature type="repeat" description="2">
    <location>
        <begin position="956"/>
        <end position="1069"/>
    </location>
</feature>
<feature type="domain" description="B30.2/SPRY 2" evidence="9">
    <location>
        <begin position="1014"/>
        <end position="1209"/>
    </location>
</feature>
<feature type="repeat" description="3; truncated">
    <location>
        <begin position="1345"/>
        <end position="1360"/>
    </location>
</feature>
<feature type="domain" description="B30.2/SPRY 3" evidence="9">
    <location>
        <begin position="1358"/>
        <end position="1571"/>
    </location>
</feature>
<feature type="repeat" description="4; truncated">
    <location>
        <begin position="1373"/>
        <end position="1388"/>
    </location>
</feature>
<feature type="repeat" description="5">
    <location>
        <begin position="2727"/>
        <end position="2846"/>
    </location>
</feature>
<feature type="repeat" description="6">
    <location>
        <begin position="2847"/>
        <end position="2960"/>
    </location>
</feature>
<feature type="domain" description="EF-hand" evidence="8">
    <location>
        <begin position="4070"/>
        <end position="4098"/>
    </location>
</feature>
<feature type="region of interest" description="Interaction with FKBP1A" evidence="4">
    <location>
        <begin position="670"/>
        <end position="681"/>
    </location>
</feature>
<feature type="region of interest" description="6 X approximate repeats">
    <location>
        <begin position="842"/>
        <end position="2960"/>
    </location>
</feature>
<feature type="region of interest" description="Disordered" evidence="10">
    <location>
        <begin position="1308"/>
        <end position="1386"/>
    </location>
</feature>
<feature type="region of interest" description="Disordered" evidence="10">
    <location>
        <begin position="1399"/>
        <end position="1419"/>
    </location>
</feature>
<feature type="region of interest" description="Disordered" evidence="10">
    <location>
        <begin position="1869"/>
        <end position="1923"/>
    </location>
</feature>
<feature type="region of interest" description="Disordered" evidence="10">
    <location>
        <begin position="2391"/>
        <end position="2414"/>
    </location>
</feature>
<feature type="region of interest" description="Disordered" evidence="10">
    <location>
        <begin position="2829"/>
        <end position="2860"/>
    </location>
</feature>
<feature type="region of interest" description="Disordered" evidence="10">
    <location>
        <begin position="3476"/>
        <end position="3495"/>
    </location>
</feature>
<feature type="region of interest" description="Interaction with CALM" evidence="1">
    <location>
        <begin position="3610"/>
        <end position="3639"/>
    </location>
</feature>
<feature type="region of interest" description="Disordered" evidence="10">
    <location>
        <begin position="4247"/>
        <end position="4281"/>
    </location>
</feature>
<feature type="region of interest" description="Disordered" evidence="10">
    <location>
        <begin position="4378"/>
        <end position="4534"/>
    </location>
</feature>
<feature type="region of interest" description="Disordered" evidence="10">
    <location>
        <begin position="4586"/>
        <end position="4618"/>
    </location>
</feature>
<feature type="short sequence motif" description="Selectivity filter" evidence="4">
    <location>
        <begin position="4892"/>
        <end position="4898"/>
    </location>
</feature>
<feature type="compositionally biased region" description="Basic and acidic residues" evidence="10">
    <location>
        <begin position="1343"/>
        <end position="1353"/>
    </location>
</feature>
<feature type="compositionally biased region" description="Basic and acidic residues" evidence="10">
    <location>
        <begin position="1373"/>
        <end position="1383"/>
    </location>
</feature>
<feature type="compositionally biased region" description="Acidic residues" evidence="10">
    <location>
        <begin position="1871"/>
        <end position="1923"/>
    </location>
</feature>
<feature type="compositionally biased region" description="Acidic residues" evidence="10">
    <location>
        <begin position="4249"/>
        <end position="4260"/>
    </location>
</feature>
<feature type="compositionally biased region" description="Low complexity" evidence="10">
    <location>
        <begin position="4261"/>
        <end position="4281"/>
    </location>
</feature>
<feature type="compositionally biased region" description="Gly residues" evidence="10">
    <location>
        <begin position="4394"/>
        <end position="4408"/>
    </location>
</feature>
<feature type="compositionally biased region" description="Low complexity" evidence="10">
    <location>
        <begin position="4432"/>
        <end position="4441"/>
    </location>
</feature>
<feature type="compositionally biased region" description="Acidic residues" evidence="10">
    <location>
        <begin position="4477"/>
        <end position="4493"/>
    </location>
</feature>
<feature type="compositionally biased region" description="Basic and acidic residues" evidence="10">
    <location>
        <begin position="4494"/>
        <end position="4509"/>
    </location>
</feature>
<feature type="compositionally biased region" description="Pro residues" evidence="10">
    <location>
        <begin position="4510"/>
        <end position="4525"/>
    </location>
</feature>
<feature type="compositionally biased region" description="Gly residues" evidence="10">
    <location>
        <begin position="4599"/>
        <end position="4613"/>
    </location>
</feature>
<feature type="binding site" evidence="4">
    <location>
        <position position="3888"/>
    </location>
    <ligand>
        <name>Ca(2+)</name>
        <dbReference type="ChEBI" id="CHEBI:29108"/>
    </ligand>
</feature>
<feature type="binding site" evidence="4">
    <location>
        <position position="3962"/>
    </location>
    <ligand>
        <name>Ca(2+)</name>
        <dbReference type="ChEBI" id="CHEBI:29108"/>
    </ligand>
</feature>
<feature type="binding site" evidence="4">
    <location>
        <begin position="4206"/>
        <end position="4210"/>
    </location>
    <ligand>
        <name>ATP</name>
        <dbReference type="ChEBI" id="CHEBI:30616"/>
    </ligand>
</feature>
<feature type="binding site" evidence="4">
    <location>
        <position position="4714"/>
    </location>
    <ligand>
        <name>caffeine</name>
        <dbReference type="ChEBI" id="CHEBI:27732"/>
    </ligand>
</feature>
<feature type="binding site" evidence="4">
    <location>
        <begin position="4952"/>
        <end position="4957"/>
    </location>
    <ligand>
        <name>ATP</name>
        <dbReference type="ChEBI" id="CHEBI:30616"/>
    </ligand>
</feature>
<feature type="binding site" evidence="4">
    <location>
        <begin position="4977"/>
        <end position="4983"/>
    </location>
    <ligand>
        <name>ATP</name>
        <dbReference type="ChEBI" id="CHEBI:30616"/>
    </ligand>
</feature>
<feature type="binding site" evidence="4">
    <location>
        <position position="4999"/>
    </location>
    <ligand>
        <name>Ca(2+)</name>
        <dbReference type="ChEBI" id="CHEBI:29108"/>
    </ligand>
</feature>
<feature type="modified residue" description="Phosphoserine" evidence="3">
    <location>
        <position position="1338"/>
    </location>
</feature>
<feature type="modified residue" description="Phosphoserine" evidence="3">
    <location>
        <position position="2346"/>
    </location>
</feature>
<feature type="modified residue" description="Phosphoserine; by PKA and PKG" evidence="2">
    <location>
        <position position="2844"/>
    </location>
</feature>
<feature type="modified residue" description="S-nitrosocysteine" evidence="4">
    <location>
        <position position="3631"/>
    </location>
</feature>
<feature type="modified residue" description="Phosphothreonine" evidence="3">
    <location>
        <position position="4463"/>
    </location>
</feature>
<feature type="modified residue" description="Phosphoserine" evidence="3">
    <location>
        <position position="4467"/>
    </location>
</feature>
<feature type="modified residue" description="Phosphotyrosine" evidence="5">
    <location>
        <position position="4861"/>
    </location>
</feature>
<feature type="modified residue" description="Phosphoserine" evidence="5">
    <location>
        <position position="4864"/>
    </location>
</feature>
<feature type="sequence conflict" description="In Ref. 3; CAA49225." evidence="12" ref="3">
    <original>A</original>
    <variation>P</variation>
    <location>
        <position position="2092"/>
    </location>
</feature>
<accession>P16960</accession>